<organism>
    <name type="scientific">Salmonella enteritidis PT4 (strain P125109)</name>
    <dbReference type="NCBI Taxonomy" id="550537"/>
    <lineage>
        <taxon>Bacteria</taxon>
        <taxon>Pseudomonadati</taxon>
        <taxon>Pseudomonadota</taxon>
        <taxon>Gammaproteobacteria</taxon>
        <taxon>Enterobacterales</taxon>
        <taxon>Enterobacteriaceae</taxon>
        <taxon>Salmonella</taxon>
    </lineage>
</organism>
<evidence type="ECO:0000255" key="1">
    <source>
        <dbReference type="HAMAP-Rule" id="MF_01454"/>
    </source>
</evidence>
<evidence type="ECO:0000255" key="2">
    <source>
        <dbReference type="PROSITE-ProRule" id="PRU01231"/>
    </source>
</evidence>
<evidence type="ECO:0000256" key="3">
    <source>
        <dbReference type="SAM" id="MobiDB-lite"/>
    </source>
</evidence>
<sequence>MKFVDEASILVVAGDGGNGCVSFRREKYIPKGGPDGGDGGDGGDVWMEADENLNTLIDYRFEKSFRAERGQNGASRDCTGKRGKDVTIKVPVGTRVIDQGTGETMGDMTKHGQRLLVAKGGWHGLGNTRFKSSVNRTPRQKTNGTPGDKRDLLLELMLLADVGMLGMPNAGKSTFIRAVSAAKPKVADYPFTTLVPSLGVVRMDSEKSFVVADIPGLIEGAAEGAGLGIRFLKHLERCRVLLHLIDIDPIDGSDPVENARIIIGELEKYSQDLAAKPRWLVFNKIDLMDKTEAEEKAKAIAEALGWEGKYYLISAASQLGVKDLCWDVMTFIIENPIAQAEEAKQPEKVEFMWDDYHRQQLAEVEEDADDDWDDDWDEDDEEGVEFIYKR</sequence>
<reference key="1">
    <citation type="journal article" date="2008" name="Genome Res.">
        <title>Comparative genome analysis of Salmonella enteritidis PT4 and Salmonella gallinarum 287/91 provides insights into evolutionary and host adaptation pathways.</title>
        <authorList>
            <person name="Thomson N.R."/>
            <person name="Clayton D.J."/>
            <person name="Windhorst D."/>
            <person name="Vernikos G."/>
            <person name="Davidson S."/>
            <person name="Churcher C."/>
            <person name="Quail M.A."/>
            <person name="Stevens M."/>
            <person name="Jones M.A."/>
            <person name="Watson M."/>
            <person name="Barron A."/>
            <person name="Layton A."/>
            <person name="Pickard D."/>
            <person name="Kingsley R.A."/>
            <person name="Bignell A."/>
            <person name="Clark L."/>
            <person name="Harris B."/>
            <person name="Ormond D."/>
            <person name="Abdellah Z."/>
            <person name="Brooks K."/>
            <person name="Cherevach I."/>
            <person name="Chillingworth T."/>
            <person name="Woodward J."/>
            <person name="Norberczak H."/>
            <person name="Lord A."/>
            <person name="Arrowsmith C."/>
            <person name="Jagels K."/>
            <person name="Moule S."/>
            <person name="Mungall K."/>
            <person name="Saunders M."/>
            <person name="Whitehead S."/>
            <person name="Chabalgoity J.A."/>
            <person name="Maskell D."/>
            <person name="Humphreys T."/>
            <person name="Roberts M."/>
            <person name="Barrow P.A."/>
            <person name="Dougan G."/>
            <person name="Parkhill J."/>
        </authorList>
    </citation>
    <scope>NUCLEOTIDE SEQUENCE [LARGE SCALE GENOMIC DNA]</scope>
    <source>
        <strain>P125109</strain>
    </source>
</reference>
<name>OBG_SALEP</name>
<feature type="chain" id="PRO_0000386223" description="GTPase Obg">
    <location>
        <begin position="1"/>
        <end position="390"/>
    </location>
</feature>
<feature type="domain" description="Obg" evidence="2">
    <location>
        <begin position="1"/>
        <end position="159"/>
    </location>
</feature>
<feature type="domain" description="OBG-type G" evidence="1">
    <location>
        <begin position="160"/>
        <end position="333"/>
    </location>
</feature>
<feature type="region of interest" description="Disordered" evidence="3">
    <location>
        <begin position="127"/>
        <end position="147"/>
    </location>
</feature>
<feature type="compositionally biased region" description="Polar residues" evidence="3">
    <location>
        <begin position="129"/>
        <end position="145"/>
    </location>
</feature>
<feature type="binding site" evidence="1">
    <location>
        <begin position="166"/>
        <end position="173"/>
    </location>
    <ligand>
        <name>GTP</name>
        <dbReference type="ChEBI" id="CHEBI:37565"/>
    </ligand>
</feature>
<feature type="binding site" evidence="1">
    <location>
        <position position="173"/>
    </location>
    <ligand>
        <name>Mg(2+)</name>
        <dbReference type="ChEBI" id="CHEBI:18420"/>
    </ligand>
</feature>
<feature type="binding site" evidence="1">
    <location>
        <begin position="191"/>
        <end position="195"/>
    </location>
    <ligand>
        <name>GTP</name>
        <dbReference type="ChEBI" id="CHEBI:37565"/>
    </ligand>
</feature>
<feature type="binding site" evidence="1">
    <location>
        <position position="193"/>
    </location>
    <ligand>
        <name>Mg(2+)</name>
        <dbReference type="ChEBI" id="CHEBI:18420"/>
    </ligand>
</feature>
<feature type="binding site" evidence="1">
    <location>
        <begin position="213"/>
        <end position="216"/>
    </location>
    <ligand>
        <name>GTP</name>
        <dbReference type="ChEBI" id="CHEBI:37565"/>
    </ligand>
</feature>
<feature type="binding site" evidence="1">
    <location>
        <begin position="283"/>
        <end position="286"/>
    </location>
    <ligand>
        <name>GTP</name>
        <dbReference type="ChEBI" id="CHEBI:37565"/>
    </ligand>
</feature>
<feature type="binding site" evidence="1">
    <location>
        <begin position="314"/>
        <end position="316"/>
    </location>
    <ligand>
        <name>GTP</name>
        <dbReference type="ChEBI" id="CHEBI:37565"/>
    </ligand>
</feature>
<gene>
    <name evidence="1" type="primary">obg</name>
    <name type="ordered locus">SEN3134</name>
</gene>
<comment type="function">
    <text evidence="1">An essential GTPase which binds GTP, GDP and possibly (p)ppGpp with moderate affinity, with high nucleotide exchange rates and a fairly low GTP hydrolysis rate. Plays a role in control of the cell cycle, stress response, ribosome biogenesis and in those bacteria that undergo differentiation, in morphogenesis control.</text>
</comment>
<comment type="cofactor">
    <cofactor evidence="1">
        <name>Mg(2+)</name>
        <dbReference type="ChEBI" id="CHEBI:18420"/>
    </cofactor>
</comment>
<comment type="subunit">
    <text evidence="1">Monomer.</text>
</comment>
<comment type="subcellular location">
    <subcellularLocation>
        <location evidence="1">Cytoplasm</location>
    </subcellularLocation>
</comment>
<comment type="similarity">
    <text evidence="1">Belongs to the TRAFAC class OBG-HflX-like GTPase superfamily. OBG GTPase family.</text>
</comment>
<proteinExistence type="inferred from homology"/>
<accession>B5R0H4</accession>
<keyword id="KW-0963">Cytoplasm</keyword>
<keyword id="KW-0342">GTP-binding</keyword>
<keyword id="KW-0378">Hydrolase</keyword>
<keyword id="KW-0460">Magnesium</keyword>
<keyword id="KW-0479">Metal-binding</keyword>
<keyword id="KW-0547">Nucleotide-binding</keyword>
<dbReference type="EC" id="3.6.5.-" evidence="1"/>
<dbReference type="EMBL" id="AM933172">
    <property type="protein sequence ID" value="CAR34710.1"/>
    <property type="molecule type" value="Genomic_DNA"/>
</dbReference>
<dbReference type="SMR" id="B5R0H4"/>
<dbReference type="KEGG" id="set:SEN3134"/>
<dbReference type="HOGENOM" id="CLU_011747_2_0_6"/>
<dbReference type="Proteomes" id="UP000000613">
    <property type="component" value="Chromosome"/>
</dbReference>
<dbReference type="GO" id="GO:0005737">
    <property type="term" value="C:cytoplasm"/>
    <property type="evidence" value="ECO:0007669"/>
    <property type="project" value="UniProtKB-SubCell"/>
</dbReference>
<dbReference type="GO" id="GO:0005525">
    <property type="term" value="F:GTP binding"/>
    <property type="evidence" value="ECO:0007669"/>
    <property type="project" value="UniProtKB-UniRule"/>
</dbReference>
<dbReference type="GO" id="GO:0003924">
    <property type="term" value="F:GTPase activity"/>
    <property type="evidence" value="ECO:0007669"/>
    <property type="project" value="UniProtKB-UniRule"/>
</dbReference>
<dbReference type="GO" id="GO:0000287">
    <property type="term" value="F:magnesium ion binding"/>
    <property type="evidence" value="ECO:0007669"/>
    <property type="project" value="InterPro"/>
</dbReference>
<dbReference type="GO" id="GO:0042254">
    <property type="term" value="P:ribosome biogenesis"/>
    <property type="evidence" value="ECO:0007669"/>
    <property type="project" value="UniProtKB-UniRule"/>
</dbReference>
<dbReference type="CDD" id="cd01898">
    <property type="entry name" value="Obg"/>
    <property type="match status" value="1"/>
</dbReference>
<dbReference type="FunFam" id="2.70.210.12:FF:000001">
    <property type="entry name" value="GTPase Obg"/>
    <property type="match status" value="1"/>
</dbReference>
<dbReference type="FunFam" id="3.40.50.300:FF:000185">
    <property type="entry name" value="GTPase Obg"/>
    <property type="match status" value="1"/>
</dbReference>
<dbReference type="Gene3D" id="2.70.210.12">
    <property type="entry name" value="GTP1/OBG domain"/>
    <property type="match status" value="1"/>
</dbReference>
<dbReference type="Gene3D" id="3.40.50.300">
    <property type="entry name" value="P-loop containing nucleotide triphosphate hydrolases"/>
    <property type="match status" value="1"/>
</dbReference>
<dbReference type="HAMAP" id="MF_01454">
    <property type="entry name" value="GTPase_Obg"/>
    <property type="match status" value="1"/>
</dbReference>
<dbReference type="InterPro" id="IPR031167">
    <property type="entry name" value="G_OBG"/>
</dbReference>
<dbReference type="InterPro" id="IPR006073">
    <property type="entry name" value="GTP-bd"/>
</dbReference>
<dbReference type="InterPro" id="IPR014100">
    <property type="entry name" value="GTP-bd_Obg/CgtA"/>
</dbReference>
<dbReference type="InterPro" id="IPR006074">
    <property type="entry name" value="GTP1-OBG_CS"/>
</dbReference>
<dbReference type="InterPro" id="IPR006169">
    <property type="entry name" value="GTP1_OBG_dom"/>
</dbReference>
<dbReference type="InterPro" id="IPR036726">
    <property type="entry name" value="GTP1_OBG_dom_sf"/>
</dbReference>
<dbReference type="InterPro" id="IPR045086">
    <property type="entry name" value="OBG_GTPase"/>
</dbReference>
<dbReference type="InterPro" id="IPR027417">
    <property type="entry name" value="P-loop_NTPase"/>
</dbReference>
<dbReference type="NCBIfam" id="TIGR02729">
    <property type="entry name" value="Obg_CgtA"/>
    <property type="match status" value="1"/>
</dbReference>
<dbReference type="NCBIfam" id="NF008955">
    <property type="entry name" value="PRK12297.1"/>
    <property type="match status" value="1"/>
</dbReference>
<dbReference type="NCBIfam" id="NF008956">
    <property type="entry name" value="PRK12299.1"/>
    <property type="match status" value="1"/>
</dbReference>
<dbReference type="PANTHER" id="PTHR11702">
    <property type="entry name" value="DEVELOPMENTALLY REGULATED GTP-BINDING PROTEIN-RELATED"/>
    <property type="match status" value="1"/>
</dbReference>
<dbReference type="PANTHER" id="PTHR11702:SF31">
    <property type="entry name" value="MITOCHONDRIAL RIBOSOME-ASSOCIATED GTPASE 2"/>
    <property type="match status" value="1"/>
</dbReference>
<dbReference type="Pfam" id="PF01018">
    <property type="entry name" value="GTP1_OBG"/>
    <property type="match status" value="1"/>
</dbReference>
<dbReference type="Pfam" id="PF01926">
    <property type="entry name" value="MMR_HSR1"/>
    <property type="match status" value="1"/>
</dbReference>
<dbReference type="PIRSF" id="PIRSF002401">
    <property type="entry name" value="GTP_bd_Obg/CgtA"/>
    <property type="match status" value="1"/>
</dbReference>
<dbReference type="PRINTS" id="PR00326">
    <property type="entry name" value="GTP1OBG"/>
</dbReference>
<dbReference type="SUPFAM" id="SSF82051">
    <property type="entry name" value="Obg GTP-binding protein N-terminal domain"/>
    <property type="match status" value="1"/>
</dbReference>
<dbReference type="SUPFAM" id="SSF52540">
    <property type="entry name" value="P-loop containing nucleoside triphosphate hydrolases"/>
    <property type="match status" value="1"/>
</dbReference>
<dbReference type="PROSITE" id="PS51710">
    <property type="entry name" value="G_OBG"/>
    <property type="match status" value="1"/>
</dbReference>
<dbReference type="PROSITE" id="PS00905">
    <property type="entry name" value="GTP1_OBG"/>
    <property type="match status" value="1"/>
</dbReference>
<dbReference type="PROSITE" id="PS51883">
    <property type="entry name" value="OBG"/>
    <property type="match status" value="1"/>
</dbReference>
<protein>
    <recommendedName>
        <fullName evidence="1">GTPase Obg</fullName>
        <ecNumber evidence="1">3.6.5.-</ecNumber>
    </recommendedName>
    <alternativeName>
        <fullName evidence="1">GTP-binding protein Obg</fullName>
    </alternativeName>
</protein>